<evidence type="ECO:0000255" key="1"/>
<evidence type="ECO:0000256" key="2">
    <source>
        <dbReference type="SAM" id="MobiDB-lite"/>
    </source>
</evidence>
<evidence type="ECO:0000305" key="3"/>
<accession>P12808</accession>
<comment type="subcellular location">
    <subcellularLocation>
        <location evidence="3">Cytoplasm</location>
        <location evidence="3">Cytoskeleton</location>
    </subcellularLocation>
</comment>
<proteinExistence type="predicted"/>
<keyword id="KW-0175">Coiled coil</keyword>
<keyword id="KW-0963">Cytoplasm</keyword>
<keyword id="KW-0206">Cytoskeleton</keyword>
<keyword id="KW-0677">Repeat</keyword>
<name>TPM_PICAN</name>
<reference key="1">
    <citation type="journal article" date="1989" name="Biochim. Biophys. Acta">
        <title>Cloning and sequencing of the peroxisomal amine oxidase gene from Hansenula polymorpha.</title>
        <authorList>
            <person name="Bruinenberg P.G."/>
            <person name="Evers M."/>
            <person name="Waterham H.R."/>
            <person name="Kuipers J."/>
            <person name="Arnberg A.C."/>
            <person name="Ab G."/>
        </authorList>
    </citation>
    <scope>NUCLEOTIDE SEQUENCE [GENOMIC DNA]</scope>
    <source>
        <strain>ATCC 34438 / CBS 4732 / DSM 70277 / JCM 3621 / NBRC 1476 / NRRL Y-5445</strain>
    </source>
</reference>
<sequence>FDRYNQILDEHNMNLREAEQILRYLKVKSVKDEETKKIKQEEAEMKKKIEGEASRKKLELEQRRTEQQPSGDANDMFGSTDDLMNLDLDNFRTDFLDFGETSERPQNDDMMKDIFEMKTADNSEGSAMDSLTDLNLDFLDQPAQAGPEPAAPAQEDDAGLMPTDQMENLFSQFDELVNSGDY</sequence>
<protein>
    <recommendedName>
        <fullName>Tropomyosin-like protein</fullName>
    </recommendedName>
</protein>
<dbReference type="EMBL" id="X15111">
    <property type="protein sequence ID" value="CAA33210.1"/>
    <property type="molecule type" value="Genomic_DNA"/>
</dbReference>
<dbReference type="PIR" id="S16512">
    <property type="entry name" value="S16512"/>
</dbReference>
<dbReference type="SMR" id="P12808"/>
<dbReference type="GO" id="GO:0005737">
    <property type="term" value="C:cytoplasm"/>
    <property type="evidence" value="ECO:0007669"/>
    <property type="project" value="UniProtKB-KW"/>
</dbReference>
<dbReference type="GO" id="GO:0005856">
    <property type="term" value="C:cytoskeleton"/>
    <property type="evidence" value="ECO:0007669"/>
    <property type="project" value="UniProtKB-SubCell"/>
</dbReference>
<feature type="chain" id="PRO_0000205695" description="Tropomyosin-like protein">
    <location>
        <begin position="1" status="less than"/>
        <end position="182"/>
    </location>
</feature>
<feature type="region of interest" description="Disordered" evidence="2">
    <location>
        <begin position="32"/>
        <end position="81"/>
    </location>
</feature>
<feature type="region of interest" description="Disordered" evidence="2">
    <location>
        <begin position="140"/>
        <end position="160"/>
    </location>
</feature>
<feature type="coiled-coil region" evidence="1">
    <location>
        <begin position="1"/>
        <end position="68"/>
    </location>
</feature>
<feature type="compositionally biased region" description="Basic and acidic residues" evidence="2">
    <location>
        <begin position="32"/>
        <end position="66"/>
    </location>
</feature>
<feature type="compositionally biased region" description="Low complexity" evidence="2">
    <location>
        <begin position="140"/>
        <end position="153"/>
    </location>
</feature>
<feature type="non-terminal residue">
    <location>
        <position position="1"/>
    </location>
</feature>
<organism>
    <name type="scientific">Pichia angusta</name>
    <name type="common">Yeast</name>
    <name type="synonym">Hansenula polymorpha</name>
    <dbReference type="NCBI Taxonomy" id="870730"/>
    <lineage>
        <taxon>Eukaryota</taxon>
        <taxon>Fungi</taxon>
        <taxon>Dikarya</taxon>
        <taxon>Ascomycota</taxon>
        <taxon>Saccharomycotina</taxon>
        <taxon>Pichiomycetes</taxon>
        <taxon>Pichiales</taxon>
        <taxon>Pichiaceae</taxon>
        <taxon>Ogataea</taxon>
    </lineage>
</organism>